<comment type="function">
    <text>Possible taste receptor.</text>
</comment>
<comment type="subcellular location">
    <subcellularLocation>
        <location>Cell membrane</location>
        <topology>Multi-pass membrane protein</topology>
    </subcellularLocation>
</comment>
<comment type="tissue specificity">
    <text>Tongue specific.</text>
</comment>
<comment type="similarity">
    <text evidence="2">Belongs to the G-protein coupled receptor 1 family.</text>
</comment>
<reference key="1">
    <citation type="journal article" date="1993" name="FEBS Lett.">
        <title>Multiple genes for G protein-coupled receptors and their expression in lingual epithelia.</title>
        <authorList>
            <person name="Abe K."/>
            <person name="Kusakabe Y."/>
            <person name="Tanemura K."/>
            <person name="Emori Y."/>
            <person name="Arai S."/>
        </authorList>
    </citation>
    <scope>NUCLEOTIDE SEQUENCE</scope>
    <source>
        <strain>Fischer</strain>
        <tissue>Tongue epithelium</tissue>
    </source>
</reference>
<feature type="chain" id="PRO_0000069665" description="Putative gustatory receptor clone PTE01">
    <location>
        <begin position="1" status="less than"/>
        <end position="185" status="greater than"/>
    </location>
</feature>
<feature type="transmembrane region" description="Helical; Name=2" evidence="1">
    <location>
        <begin position="1" status="less than"/>
        <end position="11"/>
    </location>
</feature>
<feature type="topological domain" description="Extracellular" evidence="1">
    <location>
        <begin position="12"/>
        <end position="42"/>
    </location>
</feature>
<feature type="transmembrane region" description="Helical; Name=3" evidence="1">
    <location>
        <begin position="43"/>
        <end position="62"/>
    </location>
</feature>
<feature type="topological domain" description="Cytoplasmic" evidence="1">
    <location>
        <begin position="63"/>
        <end position="84"/>
    </location>
</feature>
<feature type="transmembrane region" description="Helical; Name=4" evidence="1">
    <location>
        <begin position="85"/>
        <end position="105"/>
    </location>
</feature>
<feature type="topological domain" description="Extracellular" evidence="1">
    <location>
        <begin position="106"/>
        <end position="138"/>
    </location>
</feature>
<feature type="transmembrane region" description="Helical; Name=5" evidence="1">
    <location>
        <begin position="139"/>
        <end position="160"/>
    </location>
</feature>
<feature type="topological domain" description="Cytoplasmic" evidence="1">
    <location>
        <begin position="161"/>
        <end position="182"/>
    </location>
</feature>
<feature type="transmembrane region" description="Helical; Name=6" evidence="1">
    <location>
        <begin position="183"/>
        <end position="185" status="greater than"/>
    </location>
</feature>
<feature type="non-terminal residue">
    <location>
        <position position="1"/>
    </location>
</feature>
<feature type="non-terminal residue">
    <location>
        <position position="185"/>
    </location>
</feature>
<dbReference type="PIR" id="S28996">
    <property type="entry name" value="S28996"/>
</dbReference>
<dbReference type="SMR" id="P35894"/>
<dbReference type="STRING" id="10116.ENSRNOP00000061016"/>
<dbReference type="PhosphoSitePlus" id="P35894"/>
<dbReference type="UCSC" id="RGD:1590984">
    <property type="organism name" value="rat"/>
</dbReference>
<dbReference type="AGR" id="RGD:1590984"/>
<dbReference type="InParanoid" id="P35894"/>
<dbReference type="PhylomeDB" id="P35894"/>
<dbReference type="Proteomes" id="UP000002494">
    <property type="component" value="Unplaced"/>
</dbReference>
<dbReference type="GO" id="GO:0005886">
    <property type="term" value="C:plasma membrane"/>
    <property type="evidence" value="ECO:0000318"/>
    <property type="project" value="GO_Central"/>
</dbReference>
<dbReference type="GO" id="GO:0004930">
    <property type="term" value="F:G protein-coupled receptor activity"/>
    <property type="evidence" value="ECO:0007669"/>
    <property type="project" value="UniProtKB-KW"/>
</dbReference>
<dbReference type="GO" id="GO:0004984">
    <property type="term" value="F:olfactory receptor activity"/>
    <property type="evidence" value="ECO:0000318"/>
    <property type="project" value="GO_Central"/>
</dbReference>
<dbReference type="GO" id="GO:0007165">
    <property type="term" value="P:signal transduction"/>
    <property type="evidence" value="ECO:0000318"/>
    <property type="project" value="GO_Central"/>
</dbReference>
<dbReference type="FunFam" id="1.20.1070.10:FF:000013">
    <property type="entry name" value="Olfactory receptor"/>
    <property type="match status" value="1"/>
</dbReference>
<dbReference type="Gene3D" id="1.20.1070.10">
    <property type="entry name" value="Rhodopsin 7-helix transmembrane proteins"/>
    <property type="match status" value="1"/>
</dbReference>
<dbReference type="InterPro" id="IPR000276">
    <property type="entry name" value="GPCR_Rhodpsn"/>
</dbReference>
<dbReference type="InterPro" id="IPR017452">
    <property type="entry name" value="GPCR_Rhodpsn_7TM"/>
</dbReference>
<dbReference type="InterPro" id="IPR000725">
    <property type="entry name" value="Olfact_rcpt"/>
</dbReference>
<dbReference type="PANTHER" id="PTHR48001">
    <property type="entry name" value="OLFACTORY RECEPTOR"/>
    <property type="match status" value="1"/>
</dbReference>
<dbReference type="Pfam" id="PF13853">
    <property type="entry name" value="7tm_4"/>
    <property type="match status" value="1"/>
</dbReference>
<dbReference type="PRINTS" id="PR00237">
    <property type="entry name" value="GPCRRHODOPSN"/>
</dbReference>
<dbReference type="PRINTS" id="PR00245">
    <property type="entry name" value="OLFACTORYR"/>
</dbReference>
<dbReference type="SUPFAM" id="SSF81321">
    <property type="entry name" value="Family A G protein-coupled receptor-like"/>
    <property type="match status" value="1"/>
</dbReference>
<dbReference type="PROSITE" id="PS00237">
    <property type="entry name" value="G_PROTEIN_RECEP_F1_1"/>
    <property type="match status" value="1"/>
</dbReference>
<dbReference type="PROSITE" id="PS50262">
    <property type="entry name" value="G_PROTEIN_RECEP_F1_2"/>
    <property type="match status" value="1"/>
</dbReference>
<accession>P35894</accession>
<keyword id="KW-1003">Cell membrane</keyword>
<keyword id="KW-0297">G-protein coupled receptor</keyword>
<keyword id="KW-0472">Membrane</keyword>
<keyword id="KW-0675">Receptor</keyword>
<keyword id="KW-1185">Reference proteome</keyword>
<keyword id="KW-0807">Transducer</keyword>
<keyword id="KW-0812">Transmembrane</keyword>
<keyword id="KW-1133">Transmembrane helix</keyword>
<protein>
    <recommendedName>
        <fullName>Putative gustatory receptor clone PTE01</fullName>
    </recommendedName>
</protein>
<sequence>MYLFLSNLSLADISFTSTTLPKMIVDIQTNNRAISYSGCLTQMSFFMLFGCLDSLLLTAMAYDRFVAICHPLHYQVIMNPRLCGLLVFLSILISLLVSQLHNSVVLQLTYFKSVDISHFFCDPSLLLNLACSDTFTNNIVMYFVGAISGFLPISGIFFSYYKIVSSILRMPSPGGKYKAFSTCGS</sequence>
<evidence type="ECO:0000255" key="1"/>
<evidence type="ECO:0000255" key="2">
    <source>
        <dbReference type="PROSITE-ProRule" id="PRU00521"/>
    </source>
</evidence>
<name>GU01_RAT</name>
<organism>
    <name type="scientific">Rattus norvegicus</name>
    <name type="common">Rat</name>
    <dbReference type="NCBI Taxonomy" id="10116"/>
    <lineage>
        <taxon>Eukaryota</taxon>
        <taxon>Metazoa</taxon>
        <taxon>Chordata</taxon>
        <taxon>Craniata</taxon>
        <taxon>Vertebrata</taxon>
        <taxon>Euteleostomi</taxon>
        <taxon>Mammalia</taxon>
        <taxon>Eutheria</taxon>
        <taxon>Euarchontoglires</taxon>
        <taxon>Glires</taxon>
        <taxon>Rodentia</taxon>
        <taxon>Myomorpha</taxon>
        <taxon>Muroidea</taxon>
        <taxon>Muridae</taxon>
        <taxon>Murinae</taxon>
        <taxon>Rattus</taxon>
    </lineage>
</organism>
<proteinExistence type="evidence at transcript level"/>